<reference key="1">
    <citation type="journal article" date="2008" name="PLoS ONE">
        <title>A recalibrated molecular clock and independent origins for the cholera pandemic clones.</title>
        <authorList>
            <person name="Feng L."/>
            <person name="Reeves P.R."/>
            <person name="Lan R."/>
            <person name="Ren Y."/>
            <person name="Gao C."/>
            <person name="Zhou Z."/>
            <person name="Ren Y."/>
            <person name="Cheng J."/>
            <person name="Wang W."/>
            <person name="Wang J."/>
            <person name="Qian W."/>
            <person name="Li D."/>
            <person name="Wang L."/>
        </authorList>
    </citation>
    <scope>NUCLEOTIDE SEQUENCE [LARGE SCALE GENOMIC DNA]</scope>
    <source>
        <strain>M66-2</strain>
    </source>
</reference>
<sequence length="126" mass="14276">MDVSLPCIKIQVQTRYIEEQSNPEYQRFVFAYLITIKNLSSQTVQLMSRRWLITDADGKQTVVEGDGVVGEQPRIKANDEYTYSSGTALDTPVGVMQGQYLMIDEQGESFTVEIEPFRLAVPHVLN</sequence>
<organism>
    <name type="scientific">Vibrio cholerae serotype O1 (strain M66-2)</name>
    <dbReference type="NCBI Taxonomy" id="579112"/>
    <lineage>
        <taxon>Bacteria</taxon>
        <taxon>Pseudomonadati</taxon>
        <taxon>Pseudomonadota</taxon>
        <taxon>Gammaproteobacteria</taxon>
        <taxon>Vibrionales</taxon>
        <taxon>Vibrionaceae</taxon>
        <taxon>Vibrio</taxon>
    </lineage>
</organism>
<feature type="chain" id="PRO_1000148504" description="Protein ApaG">
    <location>
        <begin position="1"/>
        <end position="126"/>
    </location>
</feature>
<feature type="domain" description="ApaG" evidence="1">
    <location>
        <begin position="2"/>
        <end position="126"/>
    </location>
</feature>
<protein>
    <recommendedName>
        <fullName evidence="1">Protein ApaG</fullName>
    </recommendedName>
</protein>
<gene>
    <name evidence="1" type="primary">apaG</name>
    <name type="ordered locus">VCM66_0427</name>
</gene>
<evidence type="ECO:0000255" key="1">
    <source>
        <dbReference type="HAMAP-Rule" id="MF_00791"/>
    </source>
</evidence>
<accession>C3LRH3</accession>
<proteinExistence type="inferred from homology"/>
<dbReference type="EMBL" id="CP001233">
    <property type="protein sequence ID" value="ACP04753.1"/>
    <property type="molecule type" value="Genomic_DNA"/>
</dbReference>
<dbReference type="RefSeq" id="WP_000383338.1">
    <property type="nucleotide sequence ID" value="NC_012578.1"/>
</dbReference>
<dbReference type="SMR" id="C3LRH3"/>
<dbReference type="GeneID" id="89515409"/>
<dbReference type="KEGG" id="vcm:VCM66_0427"/>
<dbReference type="HOGENOM" id="CLU_128074_0_0_6"/>
<dbReference type="Proteomes" id="UP000001217">
    <property type="component" value="Chromosome I"/>
</dbReference>
<dbReference type="GO" id="GO:0070987">
    <property type="term" value="P:error-free translesion synthesis"/>
    <property type="evidence" value="ECO:0007669"/>
    <property type="project" value="TreeGrafter"/>
</dbReference>
<dbReference type="Gene3D" id="2.60.40.1470">
    <property type="entry name" value="ApaG domain"/>
    <property type="match status" value="1"/>
</dbReference>
<dbReference type="HAMAP" id="MF_00791">
    <property type="entry name" value="ApaG"/>
    <property type="match status" value="1"/>
</dbReference>
<dbReference type="InterPro" id="IPR007474">
    <property type="entry name" value="ApaG_domain"/>
</dbReference>
<dbReference type="InterPro" id="IPR036767">
    <property type="entry name" value="ApaG_sf"/>
</dbReference>
<dbReference type="InterPro" id="IPR023065">
    <property type="entry name" value="Uncharacterised_ApaG"/>
</dbReference>
<dbReference type="NCBIfam" id="NF003967">
    <property type="entry name" value="PRK05461.1"/>
    <property type="match status" value="1"/>
</dbReference>
<dbReference type="PANTHER" id="PTHR14289">
    <property type="entry name" value="F-BOX ONLY PROTEIN 3"/>
    <property type="match status" value="1"/>
</dbReference>
<dbReference type="PANTHER" id="PTHR14289:SF16">
    <property type="entry name" value="POLYMERASE DELTA-INTERACTING PROTEIN 2"/>
    <property type="match status" value="1"/>
</dbReference>
<dbReference type="Pfam" id="PF04379">
    <property type="entry name" value="DUF525"/>
    <property type="match status" value="1"/>
</dbReference>
<dbReference type="SUPFAM" id="SSF110069">
    <property type="entry name" value="ApaG-like"/>
    <property type="match status" value="1"/>
</dbReference>
<dbReference type="PROSITE" id="PS51087">
    <property type="entry name" value="APAG"/>
    <property type="match status" value="1"/>
</dbReference>
<name>APAG_VIBCM</name>